<evidence type="ECO:0000255" key="1">
    <source>
        <dbReference type="HAMAP-Rule" id="MF_00206"/>
    </source>
</evidence>
<evidence type="ECO:0000255" key="2">
    <source>
        <dbReference type="PROSITE-ProRule" id="PRU01266"/>
    </source>
</evidence>
<reference key="1">
    <citation type="journal article" date="2008" name="Mol. Biol. Evol.">
        <title>Genome evolution of Wolbachia strain wPip from the Culex pipiens group.</title>
        <authorList>
            <person name="Klasson L."/>
            <person name="Walker T."/>
            <person name="Sebaihia M."/>
            <person name="Sanders M.J."/>
            <person name="Quail M.A."/>
            <person name="Lord A."/>
            <person name="Sanders S."/>
            <person name="Earl J."/>
            <person name="O'Neill S.L."/>
            <person name="Thomson N."/>
            <person name="Sinkins S.P."/>
            <person name="Parkhill J."/>
        </authorList>
    </citation>
    <scope>NUCLEOTIDE SEQUENCE [LARGE SCALE GENOMIC DNA]</scope>
    <source>
        <strain>wPip</strain>
    </source>
</reference>
<comment type="function">
    <text evidence="1">Catalyzes the radical-mediated insertion of two sulfur atoms into the C-6 and C-8 positions of the octanoyl moiety bound to the lipoyl domains of lipoate-dependent enzymes, thereby converting the octanoylated domains into lipoylated derivatives.</text>
</comment>
<comment type="catalytic activity">
    <reaction evidence="1">
        <text>[[Fe-S] cluster scaffold protein carrying a second [4Fe-4S](2+) cluster] + N(6)-octanoyl-L-lysyl-[protein] + 2 oxidized [2Fe-2S]-[ferredoxin] + 2 S-adenosyl-L-methionine + 4 H(+) = [[Fe-S] cluster scaffold protein] + N(6)-[(R)-dihydrolipoyl]-L-lysyl-[protein] + 4 Fe(3+) + 2 hydrogen sulfide + 2 5'-deoxyadenosine + 2 L-methionine + 2 reduced [2Fe-2S]-[ferredoxin]</text>
        <dbReference type="Rhea" id="RHEA:16585"/>
        <dbReference type="Rhea" id="RHEA-COMP:9928"/>
        <dbReference type="Rhea" id="RHEA-COMP:10000"/>
        <dbReference type="Rhea" id="RHEA-COMP:10001"/>
        <dbReference type="Rhea" id="RHEA-COMP:10475"/>
        <dbReference type="Rhea" id="RHEA-COMP:14568"/>
        <dbReference type="Rhea" id="RHEA-COMP:14569"/>
        <dbReference type="ChEBI" id="CHEBI:15378"/>
        <dbReference type="ChEBI" id="CHEBI:17319"/>
        <dbReference type="ChEBI" id="CHEBI:29034"/>
        <dbReference type="ChEBI" id="CHEBI:29919"/>
        <dbReference type="ChEBI" id="CHEBI:33722"/>
        <dbReference type="ChEBI" id="CHEBI:33737"/>
        <dbReference type="ChEBI" id="CHEBI:33738"/>
        <dbReference type="ChEBI" id="CHEBI:57844"/>
        <dbReference type="ChEBI" id="CHEBI:59789"/>
        <dbReference type="ChEBI" id="CHEBI:78809"/>
        <dbReference type="ChEBI" id="CHEBI:83100"/>
        <dbReference type="EC" id="2.8.1.8"/>
    </reaction>
</comment>
<comment type="cofactor">
    <cofactor evidence="1">
        <name>[4Fe-4S] cluster</name>
        <dbReference type="ChEBI" id="CHEBI:49883"/>
    </cofactor>
    <text evidence="1">Binds 2 [4Fe-4S] clusters per subunit. One cluster is coordinated with 3 cysteines and an exchangeable S-adenosyl-L-methionine.</text>
</comment>
<comment type="pathway">
    <text evidence="1">Protein modification; protein lipoylation via endogenous pathway; protein N(6)-(lipoyl)lysine from octanoyl-[acyl-carrier-protein]: step 2/2.</text>
</comment>
<comment type="subcellular location">
    <subcellularLocation>
        <location evidence="1">Cytoplasm</location>
    </subcellularLocation>
</comment>
<comment type="similarity">
    <text evidence="1">Belongs to the radical SAM superfamily. Lipoyl synthase family.</text>
</comment>
<feature type="chain" id="PRO_1000099641" description="Lipoyl synthase">
    <location>
        <begin position="1"/>
        <end position="290"/>
    </location>
</feature>
<feature type="domain" description="Radical SAM core" evidence="2">
    <location>
        <begin position="46"/>
        <end position="262"/>
    </location>
</feature>
<feature type="binding site" evidence="1">
    <location>
        <position position="34"/>
    </location>
    <ligand>
        <name>[4Fe-4S] cluster</name>
        <dbReference type="ChEBI" id="CHEBI:49883"/>
        <label>1</label>
    </ligand>
</feature>
<feature type="binding site" evidence="1">
    <location>
        <position position="39"/>
    </location>
    <ligand>
        <name>[4Fe-4S] cluster</name>
        <dbReference type="ChEBI" id="CHEBI:49883"/>
        <label>1</label>
    </ligand>
</feature>
<feature type="binding site" evidence="1">
    <location>
        <position position="45"/>
    </location>
    <ligand>
        <name>[4Fe-4S] cluster</name>
        <dbReference type="ChEBI" id="CHEBI:49883"/>
        <label>1</label>
    </ligand>
</feature>
<feature type="binding site" evidence="1">
    <location>
        <position position="60"/>
    </location>
    <ligand>
        <name>[4Fe-4S] cluster</name>
        <dbReference type="ChEBI" id="CHEBI:49883"/>
        <label>2</label>
        <note>4Fe-4S-S-AdoMet</note>
    </ligand>
</feature>
<feature type="binding site" evidence="1">
    <location>
        <position position="64"/>
    </location>
    <ligand>
        <name>[4Fe-4S] cluster</name>
        <dbReference type="ChEBI" id="CHEBI:49883"/>
        <label>2</label>
        <note>4Fe-4S-S-AdoMet</note>
    </ligand>
</feature>
<feature type="binding site" evidence="1">
    <location>
        <position position="67"/>
    </location>
    <ligand>
        <name>[4Fe-4S] cluster</name>
        <dbReference type="ChEBI" id="CHEBI:49883"/>
        <label>2</label>
        <note>4Fe-4S-S-AdoMet</note>
    </ligand>
</feature>
<feature type="binding site" evidence="1">
    <location>
        <position position="273"/>
    </location>
    <ligand>
        <name>[4Fe-4S] cluster</name>
        <dbReference type="ChEBI" id="CHEBI:49883"/>
        <label>1</label>
    </ligand>
</feature>
<proteinExistence type="inferred from homology"/>
<name>LIPA_WOLPP</name>
<keyword id="KW-0004">4Fe-4S</keyword>
<keyword id="KW-0963">Cytoplasm</keyword>
<keyword id="KW-0408">Iron</keyword>
<keyword id="KW-0411">Iron-sulfur</keyword>
<keyword id="KW-0479">Metal-binding</keyword>
<keyword id="KW-0949">S-adenosyl-L-methionine</keyword>
<keyword id="KW-0808">Transferase</keyword>
<accession>B3CP16</accession>
<organism>
    <name type="scientific">Wolbachia pipientis subsp. Culex pipiens (strain wPip)</name>
    <dbReference type="NCBI Taxonomy" id="570417"/>
    <lineage>
        <taxon>Bacteria</taxon>
        <taxon>Pseudomonadati</taxon>
        <taxon>Pseudomonadota</taxon>
        <taxon>Alphaproteobacteria</taxon>
        <taxon>Rickettsiales</taxon>
        <taxon>Anaplasmataceae</taxon>
        <taxon>Wolbachieae</taxon>
        <taxon>Wolbachia</taxon>
    </lineage>
</organism>
<protein>
    <recommendedName>
        <fullName evidence="1">Lipoyl synthase</fullName>
        <ecNumber evidence="1">2.8.1.8</ecNumber>
    </recommendedName>
    <alternativeName>
        <fullName evidence="1">Lip-syn</fullName>
        <shortName evidence="1">LS</shortName>
    </alternativeName>
    <alternativeName>
        <fullName evidence="1">Lipoate synthase</fullName>
    </alternativeName>
    <alternativeName>
        <fullName evidence="1">Lipoic acid synthase</fullName>
    </alternativeName>
    <alternativeName>
        <fullName evidence="1">Sulfur insertion protein LipA</fullName>
    </alternativeName>
</protein>
<gene>
    <name evidence="1" type="primary">lipA</name>
    <name type="ordered locus">WP0235</name>
</gene>
<sequence length="290" mass="32679">MHSKPTWLRAKAPAGKVFNETLNTVKLHNLHTVCEEAACPNIGECWNKRHATVMILGSVCTRACAFCNVATGIPDKLDPHEPENLAKAIKKLNLKHVVITSVDRDDLSDGGANQFIRCIEEIRKITSETTIEILTPDFLNKKGAFEAIAIASPDVYNHNIETVPRLYAKIRPRARYFHSLYLLKMVKQINPKLFTKSGLMVGLGETKEEIFQVMDDLRSAEVDFITIGQYLQPTPKHAKIDRYVTPEEFEHYKYIAYSKGFLVVASSPLTRSSYHAEEDFNRLAAAKTST</sequence>
<dbReference type="EC" id="2.8.1.8" evidence="1"/>
<dbReference type="EMBL" id="AM999887">
    <property type="protein sequence ID" value="CAQ54343.1"/>
    <property type="molecule type" value="Genomic_DNA"/>
</dbReference>
<dbReference type="RefSeq" id="WP_007302639.1">
    <property type="nucleotide sequence ID" value="NC_010981.1"/>
</dbReference>
<dbReference type="SMR" id="B3CP16"/>
<dbReference type="KEGG" id="wpi:WP0235"/>
<dbReference type="eggNOG" id="COG0320">
    <property type="taxonomic scope" value="Bacteria"/>
</dbReference>
<dbReference type="HOGENOM" id="CLU_033144_2_1_5"/>
<dbReference type="UniPathway" id="UPA00538">
    <property type="reaction ID" value="UER00593"/>
</dbReference>
<dbReference type="Proteomes" id="UP000008814">
    <property type="component" value="Chromosome"/>
</dbReference>
<dbReference type="GO" id="GO:0005737">
    <property type="term" value="C:cytoplasm"/>
    <property type="evidence" value="ECO:0007669"/>
    <property type="project" value="UniProtKB-SubCell"/>
</dbReference>
<dbReference type="GO" id="GO:0051539">
    <property type="term" value="F:4 iron, 4 sulfur cluster binding"/>
    <property type="evidence" value="ECO:0007669"/>
    <property type="project" value="UniProtKB-UniRule"/>
</dbReference>
<dbReference type="GO" id="GO:0016992">
    <property type="term" value="F:lipoate synthase activity"/>
    <property type="evidence" value="ECO:0007669"/>
    <property type="project" value="UniProtKB-UniRule"/>
</dbReference>
<dbReference type="GO" id="GO:0046872">
    <property type="term" value="F:metal ion binding"/>
    <property type="evidence" value="ECO:0007669"/>
    <property type="project" value="UniProtKB-KW"/>
</dbReference>
<dbReference type="CDD" id="cd01335">
    <property type="entry name" value="Radical_SAM"/>
    <property type="match status" value="1"/>
</dbReference>
<dbReference type="FunFam" id="3.20.20.70:FF:000040">
    <property type="entry name" value="Lipoyl synthase"/>
    <property type="match status" value="1"/>
</dbReference>
<dbReference type="Gene3D" id="3.20.20.70">
    <property type="entry name" value="Aldolase class I"/>
    <property type="match status" value="1"/>
</dbReference>
<dbReference type="HAMAP" id="MF_00206">
    <property type="entry name" value="Lipoyl_synth"/>
    <property type="match status" value="1"/>
</dbReference>
<dbReference type="InterPro" id="IPR013785">
    <property type="entry name" value="Aldolase_TIM"/>
</dbReference>
<dbReference type="InterPro" id="IPR006638">
    <property type="entry name" value="Elp3/MiaA/NifB-like_rSAM"/>
</dbReference>
<dbReference type="InterPro" id="IPR031691">
    <property type="entry name" value="LIAS_N"/>
</dbReference>
<dbReference type="InterPro" id="IPR003698">
    <property type="entry name" value="Lipoyl_synth"/>
</dbReference>
<dbReference type="InterPro" id="IPR007197">
    <property type="entry name" value="rSAM"/>
</dbReference>
<dbReference type="NCBIfam" id="TIGR00510">
    <property type="entry name" value="lipA"/>
    <property type="match status" value="1"/>
</dbReference>
<dbReference type="NCBIfam" id="NF004019">
    <property type="entry name" value="PRK05481.1"/>
    <property type="match status" value="1"/>
</dbReference>
<dbReference type="NCBIfam" id="NF009544">
    <property type="entry name" value="PRK12928.1"/>
    <property type="match status" value="1"/>
</dbReference>
<dbReference type="PANTHER" id="PTHR10949">
    <property type="entry name" value="LIPOYL SYNTHASE"/>
    <property type="match status" value="1"/>
</dbReference>
<dbReference type="PANTHER" id="PTHR10949:SF0">
    <property type="entry name" value="LIPOYL SYNTHASE, MITOCHONDRIAL"/>
    <property type="match status" value="1"/>
</dbReference>
<dbReference type="Pfam" id="PF16881">
    <property type="entry name" value="LIAS_N"/>
    <property type="match status" value="1"/>
</dbReference>
<dbReference type="Pfam" id="PF04055">
    <property type="entry name" value="Radical_SAM"/>
    <property type="match status" value="1"/>
</dbReference>
<dbReference type="PIRSF" id="PIRSF005963">
    <property type="entry name" value="Lipoyl_synth"/>
    <property type="match status" value="1"/>
</dbReference>
<dbReference type="SFLD" id="SFLDF00271">
    <property type="entry name" value="lipoyl_synthase"/>
    <property type="match status" value="1"/>
</dbReference>
<dbReference type="SFLD" id="SFLDS00029">
    <property type="entry name" value="Radical_SAM"/>
    <property type="match status" value="1"/>
</dbReference>
<dbReference type="SMART" id="SM00729">
    <property type="entry name" value="Elp3"/>
    <property type="match status" value="1"/>
</dbReference>
<dbReference type="SUPFAM" id="SSF102114">
    <property type="entry name" value="Radical SAM enzymes"/>
    <property type="match status" value="1"/>
</dbReference>
<dbReference type="PROSITE" id="PS51918">
    <property type="entry name" value="RADICAL_SAM"/>
    <property type="match status" value="1"/>
</dbReference>